<name>CYB_LAECA</name>
<geneLocation type="mitochondrion"/>
<keyword id="KW-0249">Electron transport</keyword>
<keyword id="KW-0349">Heme</keyword>
<keyword id="KW-0408">Iron</keyword>
<keyword id="KW-0472">Membrane</keyword>
<keyword id="KW-0479">Metal-binding</keyword>
<keyword id="KW-0496">Mitochondrion</keyword>
<keyword id="KW-0999">Mitochondrion inner membrane</keyword>
<keyword id="KW-0679">Respiratory chain</keyword>
<keyword id="KW-0812">Transmembrane</keyword>
<keyword id="KW-1133">Transmembrane helix</keyword>
<keyword id="KW-0813">Transport</keyword>
<keyword id="KW-0830">Ubiquinone</keyword>
<gene>
    <name type="primary">MT-CYB</name>
    <name type="synonym">COB</name>
    <name type="synonym">CYTB</name>
    <name type="synonym">MTCYB</name>
</gene>
<comment type="function">
    <text evidence="2">Component of the ubiquinol-cytochrome c reductase complex (complex III or cytochrome b-c1 complex) that is part of the mitochondrial respiratory chain. The b-c1 complex mediates electron transfer from ubiquinol to cytochrome c. Contributes to the generation of a proton gradient across the mitochondrial membrane that is then used for ATP synthesis.</text>
</comment>
<comment type="cofactor">
    <cofactor evidence="2">
        <name>heme b</name>
        <dbReference type="ChEBI" id="CHEBI:60344"/>
    </cofactor>
    <text evidence="2">Binds 2 heme b groups non-covalently.</text>
</comment>
<comment type="subunit">
    <text evidence="2">The cytochrome bc1 complex contains 11 subunits: 3 respiratory subunits (MT-CYB, CYC1 and UQCRFS1), 2 core proteins (UQCRC1 and UQCRC2) and 6 low-molecular weight proteins (UQCRH/QCR6, UQCRB/QCR7, UQCRQ/QCR8, UQCR10/QCR9, UQCR11/QCR10 and a cleavage product of UQCRFS1). This cytochrome bc1 complex then forms a dimer.</text>
</comment>
<comment type="subcellular location">
    <subcellularLocation>
        <location evidence="2">Mitochondrion inner membrane</location>
        <topology evidence="2">Multi-pass membrane protein</topology>
    </subcellularLocation>
</comment>
<comment type="miscellaneous">
    <text evidence="1">Heme 1 (or BL or b562) is low-potential and absorbs at about 562 nm, and heme 2 (or BH or b566) is high-potential and absorbs at about 566 nm.</text>
</comment>
<comment type="similarity">
    <text evidence="3 4">Belongs to the cytochrome b family.</text>
</comment>
<comment type="caution">
    <text evidence="2">The full-length protein contains only eight transmembrane helices, not nine as predicted by bioinformatics tools.</text>
</comment>
<feature type="chain" id="PRO_0000254690" description="Cytochrome b">
    <location>
        <begin position="1"/>
        <end position="379"/>
    </location>
</feature>
<feature type="transmembrane region" description="Helical" evidence="2">
    <location>
        <begin position="33"/>
        <end position="53"/>
    </location>
</feature>
<feature type="transmembrane region" description="Helical" evidence="2">
    <location>
        <begin position="77"/>
        <end position="98"/>
    </location>
</feature>
<feature type="transmembrane region" description="Helical" evidence="2">
    <location>
        <begin position="113"/>
        <end position="133"/>
    </location>
</feature>
<feature type="transmembrane region" description="Helical" evidence="2">
    <location>
        <begin position="178"/>
        <end position="198"/>
    </location>
</feature>
<feature type="transmembrane region" description="Helical" evidence="2">
    <location>
        <begin position="226"/>
        <end position="246"/>
    </location>
</feature>
<feature type="transmembrane region" description="Helical" evidence="2">
    <location>
        <begin position="288"/>
        <end position="308"/>
    </location>
</feature>
<feature type="transmembrane region" description="Helical" evidence="2">
    <location>
        <begin position="320"/>
        <end position="340"/>
    </location>
</feature>
<feature type="transmembrane region" description="Helical" evidence="2">
    <location>
        <begin position="347"/>
        <end position="367"/>
    </location>
</feature>
<feature type="binding site" description="axial binding residue" evidence="2">
    <location>
        <position position="83"/>
    </location>
    <ligand>
        <name>heme b</name>
        <dbReference type="ChEBI" id="CHEBI:60344"/>
        <label>b562</label>
    </ligand>
    <ligandPart>
        <name>Fe</name>
        <dbReference type="ChEBI" id="CHEBI:18248"/>
    </ligandPart>
</feature>
<feature type="binding site" description="axial binding residue" evidence="2">
    <location>
        <position position="97"/>
    </location>
    <ligand>
        <name>heme b</name>
        <dbReference type="ChEBI" id="CHEBI:60344"/>
        <label>b566</label>
    </ligand>
    <ligandPart>
        <name>Fe</name>
        <dbReference type="ChEBI" id="CHEBI:18248"/>
    </ligandPart>
</feature>
<feature type="binding site" description="axial binding residue" evidence="2">
    <location>
        <position position="182"/>
    </location>
    <ligand>
        <name>heme b</name>
        <dbReference type="ChEBI" id="CHEBI:60344"/>
        <label>b562</label>
    </ligand>
    <ligandPart>
        <name>Fe</name>
        <dbReference type="ChEBI" id="CHEBI:18248"/>
    </ligandPart>
</feature>
<feature type="binding site" description="axial binding residue" evidence="2">
    <location>
        <position position="196"/>
    </location>
    <ligand>
        <name>heme b</name>
        <dbReference type="ChEBI" id="CHEBI:60344"/>
        <label>b566</label>
    </ligand>
    <ligandPart>
        <name>Fe</name>
        <dbReference type="ChEBI" id="CHEBI:18248"/>
    </ligandPart>
</feature>
<feature type="binding site" evidence="2">
    <location>
        <position position="201"/>
    </location>
    <ligand>
        <name>a ubiquinone</name>
        <dbReference type="ChEBI" id="CHEBI:16389"/>
    </ligand>
</feature>
<feature type="sequence variant" description="In strain: Isolate MR-M981.">
    <original>T</original>
    <variation>I</variation>
    <location>
        <position position="2"/>
    </location>
</feature>
<feature type="sequence variant" description="In strain: Isolate MR-M981.">
    <original>S</original>
    <variation>N</variation>
    <location>
        <position position="16"/>
    </location>
</feature>
<feature type="sequence variant" description="In strain: Isolate MR-M981.">
    <original>I</original>
    <variation>T</variation>
    <location>
        <position position="189"/>
    </location>
</feature>
<feature type="sequence variant" description="In strain: Isolate MR-M981.">
    <original>I</original>
    <variation>V</variation>
    <location>
        <position position="295"/>
    </location>
</feature>
<feature type="sequence variant" description="In strain: Isolate MR-M981.">
    <original>A</original>
    <variation>T</variation>
    <location>
        <position position="334"/>
    </location>
</feature>
<organism>
    <name type="scientific">Laephotis capensis</name>
    <name type="common">Cape serotine bat</name>
    <name type="synonym">Neoromicia capensis</name>
    <dbReference type="NCBI Taxonomy" id="110938"/>
    <lineage>
        <taxon>Eukaryota</taxon>
        <taxon>Metazoa</taxon>
        <taxon>Chordata</taxon>
        <taxon>Craniata</taxon>
        <taxon>Vertebrata</taxon>
        <taxon>Euteleostomi</taxon>
        <taxon>Mammalia</taxon>
        <taxon>Eutheria</taxon>
        <taxon>Laurasiatheria</taxon>
        <taxon>Chiroptera</taxon>
        <taxon>Yangochiroptera</taxon>
        <taxon>Vespertilionidae</taxon>
        <taxon>Laephotis</taxon>
    </lineage>
</organism>
<dbReference type="EMBL" id="AJ841965">
    <property type="protein sequence ID" value="CAH56558.1"/>
    <property type="molecule type" value="Genomic_DNA"/>
</dbReference>
<dbReference type="EMBL" id="AJ841966">
    <property type="protein sequence ID" value="CAH56559.1"/>
    <property type="molecule type" value="Genomic_DNA"/>
</dbReference>
<dbReference type="SMR" id="Q5F4F4"/>
<dbReference type="GO" id="GO:0005743">
    <property type="term" value="C:mitochondrial inner membrane"/>
    <property type="evidence" value="ECO:0007669"/>
    <property type="project" value="UniProtKB-SubCell"/>
</dbReference>
<dbReference type="GO" id="GO:0045275">
    <property type="term" value="C:respiratory chain complex III"/>
    <property type="evidence" value="ECO:0007669"/>
    <property type="project" value="InterPro"/>
</dbReference>
<dbReference type="GO" id="GO:0046872">
    <property type="term" value="F:metal ion binding"/>
    <property type="evidence" value="ECO:0007669"/>
    <property type="project" value="UniProtKB-KW"/>
</dbReference>
<dbReference type="GO" id="GO:0008121">
    <property type="term" value="F:ubiquinol-cytochrome-c reductase activity"/>
    <property type="evidence" value="ECO:0007669"/>
    <property type="project" value="InterPro"/>
</dbReference>
<dbReference type="GO" id="GO:0006122">
    <property type="term" value="P:mitochondrial electron transport, ubiquinol to cytochrome c"/>
    <property type="evidence" value="ECO:0007669"/>
    <property type="project" value="TreeGrafter"/>
</dbReference>
<dbReference type="CDD" id="cd00290">
    <property type="entry name" value="cytochrome_b_C"/>
    <property type="match status" value="1"/>
</dbReference>
<dbReference type="CDD" id="cd00284">
    <property type="entry name" value="Cytochrome_b_N"/>
    <property type="match status" value="1"/>
</dbReference>
<dbReference type="FunFam" id="1.20.810.10:FF:000002">
    <property type="entry name" value="Cytochrome b"/>
    <property type="match status" value="1"/>
</dbReference>
<dbReference type="Gene3D" id="1.20.810.10">
    <property type="entry name" value="Cytochrome Bc1 Complex, Chain C"/>
    <property type="match status" value="1"/>
</dbReference>
<dbReference type="InterPro" id="IPR005798">
    <property type="entry name" value="Cyt_b/b6_C"/>
</dbReference>
<dbReference type="InterPro" id="IPR036150">
    <property type="entry name" value="Cyt_b/b6_C_sf"/>
</dbReference>
<dbReference type="InterPro" id="IPR005797">
    <property type="entry name" value="Cyt_b/b6_N"/>
</dbReference>
<dbReference type="InterPro" id="IPR027387">
    <property type="entry name" value="Cytb/b6-like_sf"/>
</dbReference>
<dbReference type="InterPro" id="IPR030689">
    <property type="entry name" value="Cytochrome_b"/>
</dbReference>
<dbReference type="InterPro" id="IPR048260">
    <property type="entry name" value="Cytochrome_b_C_euk/bac"/>
</dbReference>
<dbReference type="InterPro" id="IPR048259">
    <property type="entry name" value="Cytochrome_b_N_euk/bac"/>
</dbReference>
<dbReference type="InterPro" id="IPR016174">
    <property type="entry name" value="Di-haem_cyt_TM"/>
</dbReference>
<dbReference type="PANTHER" id="PTHR19271">
    <property type="entry name" value="CYTOCHROME B"/>
    <property type="match status" value="1"/>
</dbReference>
<dbReference type="PANTHER" id="PTHR19271:SF16">
    <property type="entry name" value="CYTOCHROME B"/>
    <property type="match status" value="1"/>
</dbReference>
<dbReference type="Pfam" id="PF00032">
    <property type="entry name" value="Cytochrom_B_C"/>
    <property type="match status" value="1"/>
</dbReference>
<dbReference type="Pfam" id="PF00033">
    <property type="entry name" value="Cytochrome_B"/>
    <property type="match status" value="1"/>
</dbReference>
<dbReference type="PIRSF" id="PIRSF038885">
    <property type="entry name" value="COB"/>
    <property type="match status" value="1"/>
</dbReference>
<dbReference type="SUPFAM" id="SSF81648">
    <property type="entry name" value="a domain/subunit of cytochrome bc1 complex (Ubiquinol-cytochrome c reductase)"/>
    <property type="match status" value="1"/>
</dbReference>
<dbReference type="SUPFAM" id="SSF81342">
    <property type="entry name" value="Transmembrane di-heme cytochromes"/>
    <property type="match status" value="1"/>
</dbReference>
<dbReference type="PROSITE" id="PS51003">
    <property type="entry name" value="CYTB_CTER"/>
    <property type="match status" value="1"/>
</dbReference>
<dbReference type="PROSITE" id="PS51002">
    <property type="entry name" value="CYTB_NTER"/>
    <property type="match status" value="1"/>
</dbReference>
<accession>Q5F4F4</accession>
<accession>Q5F4F3</accession>
<proteinExistence type="inferred from homology"/>
<protein>
    <recommendedName>
        <fullName>Cytochrome b</fullName>
    </recommendedName>
    <alternativeName>
        <fullName>Complex III subunit 3</fullName>
    </alternativeName>
    <alternativeName>
        <fullName>Complex III subunit III</fullName>
    </alternativeName>
    <alternativeName>
        <fullName>Cytochrome b-c1 complex subunit 3</fullName>
    </alternativeName>
    <alternativeName>
        <fullName>Ubiquinol-cytochrome-c reductase complex cytochrome b subunit</fullName>
    </alternativeName>
</protein>
<sequence length="379" mass="42724">MTNIRKSHPLIKIVNSSFIDLPTPSSISSWWNFGSLLGICLALQILTGLFLAMHYTSDTSTAFNSVAHICRDVNYGWMLRYLHANGASMFFICLYLHVGRGLYYGSYMFKETWNMGVILLFAVMATAFMGYVLPWGQMSFWGATVITNLLSAIPYIGTDLVEWIWGGFSVDKATLTRFFAFHFLLPFIIAALVMVHLLFLHETGSNNPTGIPSDMDMIPFHPYHTIKDILGLFMMILALLSLVLFTPDLLGDPDNYSPANPLNTPPHIKPEWYFLFAYAILRSIPNKLGGVLALILSILILIIIPLLHTSKQRSMIFRPLSQCSFWLLTADLLALTWIGGQPVEHPYIIIGQLASILYFLIIIVIMPLAGLMENHLLKW</sequence>
<reference key="1">
    <citation type="journal article" date="2004" name="Acta Chiropt.">
        <title>Phylogeny of African myotis bats (Chiroptera, Vespertilionidae) inferred from cytochrome b sequences.</title>
        <authorList>
            <person name="Stadelmann B."/>
            <person name="Jacobs D.S."/>
            <person name="Schoeman C."/>
            <person name="Ruedi M."/>
        </authorList>
    </citation>
    <scope>NUCLEOTIDE SEQUENCE [GENOMIC DNA]</scope>
    <source>
        <strain>Isolate MR-M963</strain>
        <strain>Isolate MR-M981</strain>
        <tissue>Wing</tissue>
    </source>
</reference>
<evidence type="ECO:0000250" key="1"/>
<evidence type="ECO:0000250" key="2">
    <source>
        <dbReference type="UniProtKB" id="P00157"/>
    </source>
</evidence>
<evidence type="ECO:0000255" key="3">
    <source>
        <dbReference type="PROSITE-ProRule" id="PRU00967"/>
    </source>
</evidence>
<evidence type="ECO:0000255" key="4">
    <source>
        <dbReference type="PROSITE-ProRule" id="PRU00968"/>
    </source>
</evidence>